<evidence type="ECO:0000255" key="1">
    <source>
        <dbReference type="HAMAP-Rule" id="MF_00823"/>
    </source>
</evidence>
<evidence type="ECO:0000255" key="2">
    <source>
        <dbReference type="PROSITE-ProRule" id="PRU01137"/>
    </source>
</evidence>
<comment type="function">
    <text evidence="1">Component of the acetyl coenzyme A carboxylase (ACC) complex. First, biotin carboxylase catalyzes the carboxylation of biotin on its carrier protein (BCCP) and then the CO(2) group is transferred by the carboxyltransferase to acetyl-CoA to form malonyl-CoA.</text>
</comment>
<comment type="catalytic activity">
    <reaction evidence="1">
        <text>N(6)-carboxybiotinyl-L-lysyl-[protein] + acetyl-CoA = N(6)-biotinyl-L-lysyl-[protein] + malonyl-CoA</text>
        <dbReference type="Rhea" id="RHEA:54728"/>
        <dbReference type="Rhea" id="RHEA-COMP:10505"/>
        <dbReference type="Rhea" id="RHEA-COMP:10506"/>
        <dbReference type="ChEBI" id="CHEBI:57288"/>
        <dbReference type="ChEBI" id="CHEBI:57384"/>
        <dbReference type="ChEBI" id="CHEBI:83144"/>
        <dbReference type="ChEBI" id="CHEBI:83145"/>
        <dbReference type="EC" id="2.1.3.15"/>
    </reaction>
</comment>
<comment type="pathway">
    <text evidence="1">Lipid metabolism; malonyl-CoA biosynthesis; malonyl-CoA from acetyl-CoA: step 1/1.</text>
</comment>
<comment type="subunit">
    <text evidence="1">Acetyl-CoA carboxylase is a heterohexamer composed of biotin carboxyl carrier protein (AccB), biotin carboxylase (AccC) and two subunits each of ACCase subunit alpha (AccA) and ACCase subunit beta (AccD).</text>
</comment>
<comment type="subcellular location">
    <subcellularLocation>
        <location evidence="1">Cytoplasm</location>
    </subcellularLocation>
</comment>
<comment type="similarity">
    <text evidence="1">Belongs to the AccA family.</text>
</comment>
<reference key="1">
    <citation type="journal article" date="2006" name="Genome Res.">
        <title>Skewed genomic variability in strains of the toxigenic bacterial pathogen, Clostridium perfringens.</title>
        <authorList>
            <person name="Myers G.S.A."/>
            <person name="Rasko D.A."/>
            <person name="Cheung J.K."/>
            <person name="Ravel J."/>
            <person name="Seshadri R."/>
            <person name="DeBoy R.T."/>
            <person name="Ren Q."/>
            <person name="Varga J."/>
            <person name="Awad M.M."/>
            <person name="Brinkac L.M."/>
            <person name="Daugherty S.C."/>
            <person name="Haft D.H."/>
            <person name="Dodson R.J."/>
            <person name="Madupu R."/>
            <person name="Nelson W.C."/>
            <person name="Rosovitz M.J."/>
            <person name="Sullivan S.A."/>
            <person name="Khouri H."/>
            <person name="Dimitrov G.I."/>
            <person name="Watkins K.L."/>
            <person name="Mulligan S."/>
            <person name="Benton J."/>
            <person name="Radune D."/>
            <person name="Fisher D.J."/>
            <person name="Atkins H.S."/>
            <person name="Hiscox T."/>
            <person name="Jost B.H."/>
            <person name="Billington S.J."/>
            <person name="Songer J.G."/>
            <person name="McClane B.A."/>
            <person name="Titball R.W."/>
            <person name="Rood J.I."/>
            <person name="Melville S.B."/>
            <person name="Paulsen I.T."/>
        </authorList>
    </citation>
    <scope>NUCLEOTIDE SEQUENCE [LARGE SCALE GENOMIC DNA]</scope>
    <source>
        <strain>SM101 / Type A</strain>
    </source>
</reference>
<dbReference type="EC" id="2.1.3.15" evidence="1"/>
<dbReference type="EMBL" id="CP000312">
    <property type="protein sequence ID" value="ABG87651.1"/>
    <property type="molecule type" value="Genomic_DNA"/>
</dbReference>
<dbReference type="RefSeq" id="WP_011592152.1">
    <property type="nucleotide sequence ID" value="NC_008262.1"/>
</dbReference>
<dbReference type="SMR" id="Q0STU1"/>
<dbReference type="KEGG" id="cpr:CPR_1144"/>
<dbReference type="UniPathway" id="UPA00655">
    <property type="reaction ID" value="UER00711"/>
</dbReference>
<dbReference type="Proteomes" id="UP000001824">
    <property type="component" value="Chromosome"/>
</dbReference>
<dbReference type="GO" id="GO:0009317">
    <property type="term" value="C:acetyl-CoA carboxylase complex"/>
    <property type="evidence" value="ECO:0007669"/>
    <property type="project" value="InterPro"/>
</dbReference>
<dbReference type="GO" id="GO:0003989">
    <property type="term" value="F:acetyl-CoA carboxylase activity"/>
    <property type="evidence" value="ECO:0007669"/>
    <property type="project" value="InterPro"/>
</dbReference>
<dbReference type="GO" id="GO:0005524">
    <property type="term" value="F:ATP binding"/>
    <property type="evidence" value="ECO:0007669"/>
    <property type="project" value="UniProtKB-KW"/>
</dbReference>
<dbReference type="GO" id="GO:0016743">
    <property type="term" value="F:carboxyl- or carbamoyltransferase activity"/>
    <property type="evidence" value="ECO:0007669"/>
    <property type="project" value="UniProtKB-UniRule"/>
</dbReference>
<dbReference type="GO" id="GO:0006633">
    <property type="term" value="P:fatty acid biosynthetic process"/>
    <property type="evidence" value="ECO:0007669"/>
    <property type="project" value="UniProtKB-KW"/>
</dbReference>
<dbReference type="GO" id="GO:2001295">
    <property type="term" value="P:malonyl-CoA biosynthetic process"/>
    <property type="evidence" value="ECO:0007669"/>
    <property type="project" value="UniProtKB-UniRule"/>
</dbReference>
<dbReference type="Gene3D" id="3.90.226.10">
    <property type="entry name" value="2-enoyl-CoA Hydratase, Chain A, domain 1"/>
    <property type="match status" value="1"/>
</dbReference>
<dbReference type="HAMAP" id="MF_00823">
    <property type="entry name" value="AcetylCoA_CT_alpha"/>
    <property type="match status" value="1"/>
</dbReference>
<dbReference type="InterPro" id="IPR001095">
    <property type="entry name" value="Acetyl_CoA_COase_a_su"/>
</dbReference>
<dbReference type="InterPro" id="IPR029045">
    <property type="entry name" value="ClpP/crotonase-like_dom_sf"/>
</dbReference>
<dbReference type="InterPro" id="IPR011763">
    <property type="entry name" value="COA_CT_C"/>
</dbReference>
<dbReference type="NCBIfam" id="TIGR00513">
    <property type="entry name" value="accA"/>
    <property type="match status" value="1"/>
</dbReference>
<dbReference type="NCBIfam" id="NF041504">
    <property type="entry name" value="AccA_sub"/>
    <property type="match status" value="1"/>
</dbReference>
<dbReference type="NCBIfam" id="NF004344">
    <property type="entry name" value="PRK05724.1"/>
    <property type="match status" value="1"/>
</dbReference>
<dbReference type="PANTHER" id="PTHR42853">
    <property type="entry name" value="ACETYL-COENZYME A CARBOXYLASE CARBOXYL TRANSFERASE SUBUNIT ALPHA"/>
    <property type="match status" value="1"/>
</dbReference>
<dbReference type="PANTHER" id="PTHR42853:SF3">
    <property type="entry name" value="ACETYL-COENZYME A CARBOXYLASE CARBOXYL TRANSFERASE SUBUNIT ALPHA, CHLOROPLASTIC"/>
    <property type="match status" value="1"/>
</dbReference>
<dbReference type="Pfam" id="PF03255">
    <property type="entry name" value="ACCA"/>
    <property type="match status" value="1"/>
</dbReference>
<dbReference type="PRINTS" id="PR01069">
    <property type="entry name" value="ACCCTRFRASEA"/>
</dbReference>
<dbReference type="SUPFAM" id="SSF52096">
    <property type="entry name" value="ClpP/crotonase"/>
    <property type="match status" value="1"/>
</dbReference>
<dbReference type="PROSITE" id="PS50989">
    <property type="entry name" value="COA_CT_CTER"/>
    <property type="match status" value="1"/>
</dbReference>
<accession>Q0STU1</accession>
<keyword id="KW-0067">ATP-binding</keyword>
<keyword id="KW-0963">Cytoplasm</keyword>
<keyword id="KW-0275">Fatty acid biosynthesis</keyword>
<keyword id="KW-0276">Fatty acid metabolism</keyword>
<keyword id="KW-0444">Lipid biosynthesis</keyword>
<keyword id="KW-0443">Lipid metabolism</keyword>
<keyword id="KW-0547">Nucleotide-binding</keyword>
<keyword id="KW-0808">Transferase</keyword>
<protein>
    <recommendedName>
        <fullName evidence="1">Acetyl-coenzyme A carboxylase carboxyl transferase subunit alpha</fullName>
        <shortName evidence="1">ACCase subunit alpha</shortName>
        <shortName evidence="1">Acetyl-CoA carboxylase carboxyltransferase subunit alpha</shortName>
        <ecNumber evidence="1">2.1.3.15</ecNumber>
    </recommendedName>
</protein>
<proteinExistence type="inferred from homology"/>
<gene>
    <name evidence="1" type="primary">accA</name>
    <name type="ordered locus">CPR_1144</name>
</gene>
<sequence length="271" mass="30144">MSRELIRTVDAWNKVKIARDPNRPNTKFYINEIFDEFIELHGDRNFGDDKAIIGGIALLNNLSFTVVGICKGENTKENIKRNFGMPHPEGYRKALRLMKQAEKFKRPVICFVDTPGAFCGIGAEERGQGQAIAQNLVELIGLKVPLISIVIGEGGSGGALALAVADKVFMLEHSIYSVLSPEGFASILWKDSSRAEEAASVMKITAQDLKRFNIIDKIIKEPRGGAHKNPIKMAQNIKKTILEALGEMKGTDLDTLLNERYNKYRNIENNL</sequence>
<feature type="chain" id="PRO_1000062609" description="Acetyl-coenzyme A carboxylase carboxyl transferase subunit alpha">
    <location>
        <begin position="1"/>
        <end position="271"/>
    </location>
</feature>
<feature type="domain" description="CoA carboxyltransferase C-terminal" evidence="2">
    <location>
        <begin position="1"/>
        <end position="247"/>
    </location>
</feature>
<organism>
    <name type="scientific">Clostridium perfringens (strain SM101 / Type A)</name>
    <dbReference type="NCBI Taxonomy" id="289380"/>
    <lineage>
        <taxon>Bacteria</taxon>
        <taxon>Bacillati</taxon>
        <taxon>Bacillota</taxon>
        <taxon>Clostridia</taxon>
        <taxon>Eubacteriales</taxon>
        <taxon>Clostridiaceae</taxon>
        <taxon>Clostridium</taxon>
    </lineage>
</organism>
<name>ACCA_CLOPS</name>